<name>CDK2H_PLAF7</name>
<feature type="chain" id="PRO_0000085741" description="Cyclin-dependent kinase 2 homolog">
    <location>
        <begin position="1"/>
        <end position="288"/>
    </location>
</feature>
<feature type="domain" description="Protein kinase" evidence="4">
    <location>
        <begin position="4"/>
        <end position="284"/>
    </location>
</feature>
<feature type="active site" description="Proton acceptor" evidence="4 5">
    <location>
        <position position="125"/>
    </location>
</feature>
<feature type="binding site" evidence="4">
    <location>
        <begin position="10"/>
        <end position="18"/>
    </location>
    <ligand>
        <name>ATP</name>
        <dbReference type="ChEBI" id="CHEBI:30616"/>
    </ligand>
</feature>
<feature type="binding site" evidence="4">
    <location>
        <position position="32"/>
    </location>
    <ligand>
        <name>ATP</name>
        <dbReference type="ChEBI" id="CHEBI:30616"/>
    </ligand>
</feature>
<feature type="modified residue" description="Phosphothreonine" evidence="3">
    <location>
        <position position="14"/>
    </location>
</feature>
<feature type="modified residue" description="Phosphotyrosine" evidence="3">
    <location>
        <position position="15"/>
    </location>
</feature>
<feature type="modified residue" description="Phosphothreonine" evidence="3">
    <location>
        <position position="158"/>
    </location>
</feature>
<protein>
    <recommendedName>
        <fullName evidence="10">Cyclin-dependent kinase 2 homolog</fullName>
        <ecNumber evidence="6 7 8">2.7.11.22</ecNumber>
        <ecNumber evidence="7">2.7.11.23</ecNumber>
    </recommendedName>
    <alternativeName>
        <fullName evidence="11">Cell division control protein 2 homolog</fullName>
    </alternativeName>
    <alternativeName>
        <fullName evidence="9">Protein kinase 5</fullName>
        <shortName evidence="9">PfPK5</shortName>
    </alternativeName>
    <alternativeName>
        <fullName evidence="1">cdc2-related kinase 2</fullName>
    </alternativeName>
</protein>
<evidence type="ECO:0000250" key="1">
    <source>
        <dbReference type="UniProtKB" id="O96821"/>
    </source>
</evidence>
<evidence type="ECO:0000250" key="2">
    <source>
        <dbReference type="UniProtKB" id="P04551"/>
    </source>
</evidence>
<evidence type="ECO:0000250" key="3">
    <source>
        <dbReference type="UniProtKB" id="P24941"/>
    </source>
</evidence>
<evidence type="ECO:0000255" key="4">
    <source>
        <dbReference type="PROSITE-ProRule" id="PRU00159"/>
    </source>
</evidence>
<evidence type="ECO:0000255" key="5">
    <source>
        <dbReference type="PROSITE-ProRule" id="PRU10027"/>
    </source>
</evidence>
<evidence type="ECO:0000269" key="6">
    <source>
    </source>
</evidence>
<evidence type="ECO:0000269" key="7">
    <source>
    </source>
</evidence>
<evidence type="ECO:0000269" key="8">
    <source>
    </source>
</evidence>
<evidence type="ECO:0000303" key="9">
    <source>
    </source>
</evidence>
<evidence type="ECO:0000305" key="10"/>
<evidence type="ECO:0000305" key="11">
    <source>
    </source>
</evidence>
<evidence type="ECO:0000305" key="12">
    <source>
    </source>
</evidence>
<dbReference type="EC" id="2.7.11.22" evidence="6 7 8"/>
<dbReference type="EC" id="2.7.11.23" evidence="7"/>
<dbReference type="EMBL" id="AL844509">
    <property type="protein sequence ID" value="CAD52689.1"/>
    <property type="molecule type" value="Genomic_DNA"/>
</dbReference>
<dbReference type="RefSeq" id="XP_001350280.1">
    <property type="nucleotide sequence ID" value="XM_001350244.1"/>
</dbReference>
<dbReference type="SMR" id="P61075"/>
<dbReference type="FunCoup" id="P61075">
    <property type="interactions" value="287"/>
</dbReference>
<dbReference type="STRING" id="36329.P61075"/>
<dbReference type="BindingDB" id="P61075"/>
<dbReference type="ChEMBL" id="CHEMBL1908388"/>
<dbReference type="SwissPalm" id="P61075"/>
<dbReference type="PaxDb" id="5833-MAL13P1.279"/>
<dbReference type="EnsemblProtists" id="CAD52689">
    <property type="protein sequence ID" value="CAD52689"/>
    <property type="gene ID" value="PF3D7_1356900"/>
</dbReference>
<dbReference type="GeneID" id="813841"/>
<dbReference type="KEGG" id="pfa:PF3D7_1356900"/>
<dbReference type="VEuPathDB" id="PlasmoDB:PF3D7_1356900"/>
<dbReference type="HOGENOM" id="CLU_000288_181_1_1"/>
<dbReference type="InParanoid" id="P61075"/>
<dbReference type="OMA" id="YLYQITR"/>
<dbReference type="OrthoDB" id="1732493at2759"/>
<dbReference type="PhylomeDB" id="P61075"/>
<dbReference type="PRO" id="PR:P61075"/>
<dbReference type="Proteomes" id="UP000001450">
    <property type="component" value="Chromosome 13"/>
</dbReference>
<dbReference type="GO" id="GO:0005737">
    <property type="term" value="C:cytoplasm"/>
    <property type="evidence" value="ECO:0000318"/>
    <property type="project" value="GO_Central"/>
</dbReference>
<dbReference type="GO" id="GO:0005634">
    <property type="term" value="C:nucleus"/>
    <property type="evidence" value="ECO:0000314"/>
    <property type="project" value="GeneDB"/>
</dbReference>
<dbReference type="GO" id="GO:0005524">
    <property type="term" value="F:ATP binding"/>
    <property type="evidence" value="ECO:0007669"/>
    <property type="project" value="UniProtKB-KW"/>
</dbReference>
<dbReference type="GO" id="GO:0004693">
    <property type="term" value="F:cyclin-dependent protein serine/threonine kinase activity"/>
    <property type="evidence" value="ECO:0000314"/>
    <property type="project" value="GeneDB"/>
</dbReference>
<dbReference type="GO" id="GO:0046872">
    <property type="term" value="F:metal ion binding"/>
    <property type="evidence" value="ECO:0007669"/>
    <property type="project" value="UniProtKB-KW"/>
</dbReference>
<dbReference type="GO" id="GO:0106310">
    <property type="term" value="F:protein serine kinase activity"/>
    <property type="evidence" value="ECO:0007669"/>
    <property type="project" value="RHEA"/>
</dbReference>
<dbReference type="GO" id="GO:0008353">
    <property type="term" value="F:RNA polymerase II CTD heptapeptide repeat kinase activity"/>
    <property type="evidence" value="ECO:0007669"/>
    <property type="project" value="UniProtKB-EC"/>
</dbReference>
<dbReference type="GO" id="GO:0051301">
    <property type="term" value="P:cell division"/>
    <property type="evidence" value="ECO:0007669"/>
    <property type="project" value="UniProtKB-KW"/>
</dbReference>
<dbReference type="GO" id="GO:0006468">
    <property type="term" value="P:protein phosphorylation"/>
    <property type="evidence" value="ECO:0000250"/>
    <property type="project" value="GeneDB"/>
</dbReference>
<dbReference type="GO" id="GO:1901987">
    <property type="term" value="P:regulation of cell cycle phase transition"/>
    <property type="evidence" value="ECO:0000318"/>
    <property type="project" value="GO_Central"/>
</dbReference>
<dbReference type="CDD" id="cd07829">
    <property type="entry name" value="STKc_CDK_like"/>
    <property type="match status" value="1"/>
</dbReference>
<dbReference type="FunFam" id="3.30.200.20:FF:000396">
    <property type="entry name" value="Cdc2-related kinase 2, putative"/>
    <property type="match status" value="1"/>
</dbReference>
<dbReference type="FunFam" id="1.10.510.10:FF:000184">
    <property type="entry name" value="cyclin-dependent kinase 5 homolog"/>
    <property type="match status" value="1"/>
</dbReference>
<dbReference type="Gene3D" id="3.30.200.20">
    <property type="entry name" value="Phosphorylase Kinase, domain 1"/>
    <property type="match status" value="1"/>
</dbReference>
<dbReference type="Gene3D" id="1.10.510.10">
    <property type="entry name" value="Transferase(Phosphotransferase) domain 1"/>
    <property type="match status" value="1"/>
</dbReference>
<dbReference type="InterPro" id="IPR050108">
    <property type="entry name" value="CDK"/>
</dbReference>
<dbReference type="InterPro" id="IPR011009">
    <property type="entry name" value="Kinase-like_dom_sf"/>
</dbReference>
<dbReference type="InterPro" id="IPR000719">
    <property type="entry name" value="Prot_kinase_dom"/>
</dbReference>
<dbReference type="InterPro" id="IPR017441">
    <property type="entry name" value="Protein_kinase_ATP_BS"/>
</dbReference>
<dbReference type="InterPro" id="IPR008271">
    <property type="entry name" value="Ser/Thr_kinase_AS"/>
</dbReference>
<dbReference type="PANTHER" id="PTHR24056">
    <property type="entry name" value="CELL DIVISION PROTEIN KINASE"/>
    <property type="match status" value="1"/>
</dbReference>
<dbReference type="PANTHER" id="PTHR24056:SF46">
    <property type="entry name" value="CYCLIN-DEPENDENT KINASE 5"/>
    <property type="match status" value="1"/>
</dbReference>
<dbReference type="Pfam" id="PF00069">
    <property type="entry name" value="Pkinase"/>
    <property type="match status" value="1"/>
</dbReference>
<dbReference type="SMART" id="SM00220">
    <property type="entry name" value="S_TKc"/>
    <property type="match status" value="1"/>
</dbReference>
<dbReference type="SUPFAM" id="SSF56112">
    <property type="entry name" value="Protein kinase-like (PK-like)"/>
    <property type="match status" value="1"/>
</dbReference>
<dbReference type="PROSITE" id="PS00107">
    <property type="entry name" value="PROTEIN_KINASE_ATP"/>
    <property type="match status" value="1"/>
</dbReference>
<dbReference type="PROSITE" id="PS50011">
    <property type="entry name" value="PROTEIN_KINASE_DOM"/>
    <property type="match status" value="1"/>
</dbReference>
<dbReference type="PROSITE" id="PS00108">
    <property type="entry name" value="PROTEIN_KINASE_ST"/>
    <property type="match status" value="1"/>
</dbReference>
<gene>
    <name evidence="1" type="primary">CRK2</name>
    <name evidence="9" type="synonym">PK5</name>
    <name type="ORF">MAL13P1.279</name>
    <name type="ORF">PF3D7_1356900</name>
</gene>
<keyword id="KW-0067">ATP-binding</keyword>
<keyword id="KW-0131">Cell cycle</keyword>
<keyword id="KW-0132">Cell division</keyword>
<keyword id="KW-0963">Cytoplasm</keyword>
<keyword id="KW-0418">Kinase</keyword>
<keyword id="KW-0460">Magnesium</keyword>
<keyword id="KW-0479">Metal-binding</keyword>
<keyword id="KW-0498">Mitosis</keyword>
<keyword id="KW-0547">Nucleotide-binding</keyword>
<keyword id="KW-0597">Phosphoprotein</keyword>
<keyword id="KW-1185">Reference proteome</keyword>
<keyword id="KW-0723">Serine/threonine-protein kinase</keyword>
<keyword id="KW-0808">Transferase</keyword>
<accession>P61075</accession>
<sequence length="288" mass="32996">MEKYHGLEKIGEGTYGVVYKAQNNYGETFALKKIRLEKEDEGIPSTTIREISILKELKHSNIVKLYDVIHTKKRLVLVFEHLDQDLKKLLDVCEGGLESVTAKSFLLQLLNGIAYCHDRRVLHRDLKPQNLLINREGELKIADFGLARAFGIPVRKYTHEVVTLWYRAPDVLMGSKKYSTTIDIWSVGCIFAEMVNGTPLFPGVSEADQLMRIFRILGTPNSKNWPNVTELPKYDPNFTVYEPLPWESFLKGLDESGIDLLSKMLKLDPNQRITAKQALEHAYFKENN</sequence>
<organism>
    <name type="scientific">Plasmodium falciparum (isolate 3D7)</name>
    <dbReference type="NCBI Taxonomy" id="36329"/>
    <lineage>
        <taxon>Eukaryota</taxon>
        <taxon>Sar</taxon>
        <taxon>Alveolata</taxon>
        <taxon>Apicomplexa</taxon>
        <taxon>Aconoidasida</taxon>
        <taxon>Haemosporida</taxon>
        <taxon>Plasmodiidae</taxon>
        <taxon>Plasmodium</taxon>
        <taxon>Plasmodium (Laverania)</taxon>
    </lineage>
</organism>
<reference key="1">
    <citation type="journal article" date="2002" name="Nature">
        <title>Genome sequence of the human malaria parasite Plasmodium falciparum.</title>
        <authorList>
            <person name="Gardner M.J."/>
            <person name="Hall N."/>
            <person name="Fung E."/>
            <person name="White O."/>
            <person name="Berriman M."/>
            <person name="Hyman R.W."/>
            <person name="Carlton J.M."/>
            <person name="Pain A."/>
            <person name="Nelson K.E."/>
            <person name="Bowman S."/>
            <person name="Paulsen I.T."/>
            <person name="James K.D."/>
            <person name="Eisen J.A."/>
            <person name="Rutherford K.M."/>
            <person name="Salzberg S.L."/>
            <person name="Craig A."/>
            <person name="Kyes S."/>
            <person name="Chan M.-S."/>
            <person name="Nene V."/>
            <person name="Shallom S.J."/>
            <person name="Suh B."/>
            <person name="Peterson J."/>
            <person name="Angiuoli S."/>
            <person name="Pertea M."/>
            <person name="Allen J."/>
            <person name="Selengut J."/>
            <person name="Haft D."/>
            <person name="Mather M.W."/>
            <person name="Vaidya A.B."/>
            <person name="Martin D.M.A."/>
            <person name="Fairlamb A.H."/>
            <person name="Fraunholz M.J."/>
            <person name="Roos D.S."/>
            <person name="Ralph S.A."/>
            <person name="McFadden G.I."/>
            <person name="Cummings L.M."/>
            <person name="Subramanian G.M."/>
            <person name="Mungall C."/>
            <person name="Venter J.C."/>
            <person name="Carucci D.J."/>
            <person name="Hoffman S.L."/>
            <person name="Newbold C."/>
            <person name="Davis R.W."/>
            <person name="Fraser C.M."/>
            <person name="Barrell B.G."/>
        </authorList>
    </citation>
    <scope>NUCLEOTIDE SEQUENCE [LARGE SCALE GENOMIC DNA]</scope>
    <source>
        <strain>3D7</strain>
    </source>
</reference>
<reference key="2">
    <citation type="journal article" date="2002" name="Nature">
        <title>Sequence of Plasmodium falciparum chromosomes 1, 3-9 and 13.</title>
        <authorList>
            <person name="Hall N."/>
            <person name="Pain A."/>
            <person name="Berriman M."/>
            <person name="Churcher C.M."/>
            <person name="Harris B."/>
            <person name="Harris D."/>
            <person name="Mungall K.L."/>
            <person name="Bowman S."/>
            <person name="Atkin R."/>
            <person name="Baker S."/>
            <person name="Barron A."/>
            <person name="Brooks K."/>
            <person name="Buckee C.O."/>
            <person name="Burrows C."/>
            <person name="Cherevach I."/>
            <person name="Chillingworth C."/>
            <person name="Chillingworth T."/>
            <person name="Christodoulou Z."/>
            <person name="Clark L."/>
            <person name="Clark R."/>
            <person name="Corton C."/>
            <person name="Cronin A."/>
            <person name="Davies R.M."/>
            <person name="Davis P."/>
            <person name="Dear P."/>
            <person name="Dearden F."/>
            <person name="Doggett J."/>
            <person name="Feltwell T."/>
            <person name="Goble A."/>
            <person name="Goodhead I."/>
            <person name="Gwilliam R."/>
            <person name="Hamlin N."/>
            <person name="Hance Z."/>
            <person name="Harper D."/>
            <person name="Hauser H."/>
            <person name="Hornsby T."/>
            <person name="Holroyd S."/>
            <person name="Horrocks P."/>
            <person name="Humphray S."/>
            <person name="Jagels K."/>
            <person name="James K.D."/>
            <person name="Johnson D."/>
            <person name="Kerhornou A."/>
            <person name="Knights A."/>
            <person name="Konfortov B."/>
            <person name="Kyes S."/>
            <person name="Larke N."/>
            <person name="Lawson D."/>
            <person name="Lennard N."/>
            <person name="Line A."/>
            <person name="Maddison M."/>
            <person name="Mclean J."/>
            <person name="Mooney P."/>
            <person name="Moule S."/>
            <person name="Murphy L."/>
            <person name="Oliver K."/>
            <person name="Ormond D."/>
            <person name="Price C."/>
            <person name="Quail M.A."/>
            <person name="Rabbinowitsch E."/>
            <person name="Rajandream M.A."/>
            <person name="Rutter S."/>
            <person name="Rutherford K.M."/>
            <person name="Sanders M."/>
            <person name="Simmonds M."/>
            <person name="Seeger K."/>
            <person name="Sharp S."/>
            <person name="Smith R."/>
            <person name="Squares R."/>
            <person name="Squares S."/>
            <person name="Stevens K."/>
            <person name="Taylor K."/>
            <person name="Tivey A."/>
            <person name="Unwin L."/>
            <person name="Whitehead S."/>
            <person name="Woodward J.R."/>
            <person name="Sulston J.E."/>
            <person name="Craig A."/>
            <person name="Newbold C."/>
            <person name="Barrell B.G."/>
        </authorList>
    </citation>
    <scope>NUCLEOTIDE SEQUENCE [LARGE SCALE GENOMIC DNA]</scope>
    <source>
        <strain>3D7</strain>
    </source>
</reference>
<reference key="3">
    <citation type="journal article" date="2000" name="J. Biol. Chem.">
        <title>Activation of a Plasmodium falciparum cdc2-related kinase by heterologous p25 and cyclin H. Functional characterization of a P. falciparum cyclin homologue.</title>
        <authorList>
            <person name="Le Roch K."/>
            <person name="Sestier C."/>
            <person name="Dorin D."/>
            <person name="Waters N."/>
            <person name="Kappes B."/>
            <person name="Chakrabarti D."/>
            <person name="Meijer L."/>
            <person name="Doerig C."/>
        </authorList>
    </citation>
    <scope>FUNCTION</scope>
    <scope>CATALYTIC ACTIVITY</scope>
    <scope>COFACTOR</scope>
    <scope>ACTIVITY REGULATION</scope>
    <scope>PHOSPHORYLATION</scope>
</reference>
<reference key="4">
    <citation type="journal article" date="2003" name="J. Biol. Chem.">
        <title>Identification and initial characterization of three novel cyclin-related proteins of the human malaria parasite Plasmodium falciparum.</title>
        <authorList>
            <person name="Merckx A."/>
            <person name="Le Roch K."/>
            <person name="Nivez M.P."/>
            <person name="Dorin D."/>
            <person name="Alano P."/>
            <person name="Gutierrez G.J."/>
            <person name="Nebreda A.R."/>
            <person name="Goldring D."/>
            <person name="Whittle C."/>
            <person name="Patterson S."/>
            <person name="Chakrabarti D."/>
            <person name="Doerig C."/>
        </authorList>
    </citation>
    <scope>FUNCTION</scope>
    <scope>CATALYTIC ACTIVITY</scope>
    <scope>ACTIVITY REGULATION</scope>
    <scope>SUBUNIT</scope>
    <scope>DEVELOPMENTAL STAGE</scope>
    <scope>PHOSPHORYLATION</scope>
</reference>
<reference key="5">
    <citation type="journal article" date="2015" name="Mol. Microbiol.">
        <title>Regulation of Plasmodium falciparum Origin Recognition Complex subunit 1 (PfORC1) function through phosphorylation mediated by CDK-like kinase PK5.</title>
        <authorList>
            <person name="Deshmukh A.S."/>
            <person name="Agarwal M."/>
            <person name="Mehra P."/>
            <person name="Gupta A."/>
            <person name="Gupta N."/>
            <person name="Doerig C.D."/>
            <person name="Dhar S.K."/>
        </authorList>
    </citation>
    <scope>FUNCTION</scope>
    <scope>CATALYTIC ACTIVITY</scope>
    <scope>DEVELOPMENTAL STAGE</scope>
</reference>
<comment type="function">
    <text evidence="2 6 7 8">Serine/threonine-protein kinase (PubMed:10722743, PubMed:12869562, PubMed:26094711). Involved in the control of the cell cycle (By similarity). Required for entry into S-phase and mitosis (By similarity). Probable component of the kinase complex that phosphorylates the repetitive C-terminus of RNA polymerase II (PubMed:12869562). In schizonts, phosphorylates ORC1 resulting in its dissociation from DNA, relocalization to the cytoplasm and likely its degradation (PubMed:26094711).</text>
</comment>
<comment type="catalytic activity">
    <reaction evidence="6 7 8">
        <text>L-seryl-[protein] + ATP = O-phospho-L-seryl-[protein] + ADP + H(+)</text>
        <dbReference type="Rhea" id="RHEA:17989"/>
        <dbReference type="Rhea" id="RHEA-COMP:9863"/>
        <dbReference type="Rhea" id="RHEA-COMP:11604"/>
        <dbReference type="ChEBI" id="CHEBI:15378"/>
        <dbReference type="ChEBI" id="CHEBI:29999"/>
        <dbReference type="ChEBI" id="CHEBI:30616"/>
        <dbReference type="ChEBI" id="CHEBI:83421"/>
        <dbReference type="ChEBI" id="CHEBI:456216"/>
        <dbReference type="EC" id="2.7.11.22"/>
    </reaction>
</comment>
<comment type="catalytic activity">
    <reaction evidence="6 7 8">
        <text>L-threonyl-[protein] + ATP = O-phospho-L-threonyl-[protein] + ADP + H(+)</text>
        <dbReference type="Rhea" id="RHEA:46608"/>
        <dbReference type="Rhea" id="RHEA-COMP:11060"/>
        <dbReference type="Rhea" id="RHEA-COMP:11605"/>
        <dbReference type="ChEBI" id="CHEBI:15378"/>
        <dbReference type="ChEBI" id="CHEBI:30013"/>
        <dbReference type="ChEBI" id="CHEBI:30616"/>
        <dbReference type="ChEBI" id="CHEBI:61977"/>
        <dbReference type="ChEBI" id="CHEBI:456216"/>
        <dbReference type="EC" id="2.7.11.22"/>
    </reaction>
</comment>
<comment type="catalytic activity">
    <reaction evidence="7">
        <text>[DNA-directed RNA polymerase] + ATP = phospho-[DNA-directed RNA polymerase] + ADP + H(+)</text>
        <dbReference type="Rhea" id="RHEA:10216"/>
        <dbReference type="Rhea" id="RHEA-COMP:11321"/>
        <dbReference type="Rhea" id="RHEA-COMP:11322"/>
        <dbReference type="ChEBI" id="CHEBI:15378"/>
        <dbReference type="ChEBI" id="CHEBI:30616"/>
        <dbReference type="ChEBI" id="CHEBI:43176"/>
        <dbReference type="ChEBI" id="CHEBI:68546"/>
        <dbReference type="ChEBI" id="CHEBI:456216"/>
        <dbReference type="EC" id="2.7.11.23"/>
    </reaction>
</comment>
<comment type="cofactor">
    <cofactor evidence="6">
        <name>Mg(2+)</name>
        <dbReference type="ChEBI" id="CHEBI:18420"/>
    </cofactor>
</comment>
<comment type="activity regulation">
    <text evidence="3 6 7">Phosphorylation at Thr-14 or Tyr-15 inactivates the enzyme, while phosphorylation at Thr-158 activates it (By similarity). Activated by cyclin cyc-1 in vitro (PubMed:10722743, PubMed:12869562). Activated by cyclin cyc-3 in vitro (PubMed:12869562).</text>
</comment>
<comment type="subunit">
    <text evidence="12">May form a complex composed of at least the catalytic subunit CRK2 and a cyclin.</text>
</comment>
<comment type="subcellular location">
    <subcellularLocation>
        <location evidence="2">Cytoplasm</location>
    </subcellularLocation>
</comment>
<comment type="developmental stage">
    <text evidence="7 8">Expressed during the asexual blood stage; expression is low at the ring stage and peaks in trophozoites and schizonts (at protein level).</text>
</comment>
<comment type="PTM">
    <text evidence="6 7">Autophosphorylates in presence of cyclin cyc-1 but not in presence of cyclin cyc-3.</text>
</comment>
<comment type="similarity">
    <text evidence="10">Belongs to the protein kinase superfamily. CMGC Ser/Thr protein kinase family. CDC2/CDKX subfamily.</text>
</comment>
<proteinExistence type="evidence at protein level"/>